<accession>P93005</accession>
<name>PP181_ARATH</name>
<sequence>MHPSTFQTELNPHTSTLLKKLTHHSQQRNLVAGRAVHGQIIRTGASTCIQHANVLVNFYAKCGKLAKAHSIFNAIICKDVVSWNSLITGYSQNGGISSSYTVMQLFREMRAQDILPNAYTLAGIFKAESSLQSSTVGRQAHALVVKMSSFGDIYVDTSLVGMYCKAGLVEDGLKVFAYMPERNTYTWSTMVSGYATRGRVEEAIKVFNLFLREKEEGSDSDYVFTAVLSSLAATIYVGLGRQIHCITIKNGLLGFVALSNALVTMYSKCESLNEACKMFDSSGDRNSITWSAMVTGYSQNGESLEAVKLFSRMFSAGIKPSEYTIVGVLNACSDICYLEEGKQLHSFLLKLGFERHLFATTALVDMYAKAGCLADARKGFDCLQERDVALWTSLISGYVQNSDNEEALILYRRMKTAGIIPNDPTMASVLKACSSLATLELGKQVHGHTIKHGFGLEVPIGSALSTMYSKCGSLEDGNLVFRRTPNKDVVSWNAMISGLSHNGQGDEALELFEEMLAEGMEPDDVTFVNIISACSHKGFVERGWFYFNMMSDQIGLDPKVDHYACMVDLLSRAGQLKEAKEFIESANIDHGLCLWRILLSACKNHGKCELGVYAGEKLMALGSRESSTYVQLSGIYTALGRMRDVERVWKHMRANGVSKEVGCSWIELKNQYHVFVVGDTMHPMIEETKDLVCLVSRQMIEEGFVTVLDSSFVEEEEGTQLSTSFII</sequence>
<organism>
    <name type="scientific">Arabidopsis thaliana</name>
    <name type="common">Mouse-ear cress</name>
    <dbReference type="NCBI Taxonomy" id="3702"/>
    <lineage>
        <taxon>Eukaryota</taxon>
        <taxon>Viridiplantae</taxon>
        <taxon>Streptophyta</taxon>
        <taxon>Embryophyta</taxon>
        <taxon>Tracheophyta</taxon>
        <taxon>Spermatophyta</taxon>
        <taxon>Magnoliopsida</taxon>
        <taxon>eudicotyledons</taxon>
        <taxon>Gunneridae</taxon>
        <taxon>Pentapetalae</taxon>
        <taxon>rosids</taxon>
        <taxon>malvids</taxon>
        <taxon>Brassicales</taxon>
        <taxon>Brassicaceae</taxon>
        <taxon>Camelineae</taxon>
        <taxon>Arabidopsis</taxon>
    </lineage>
</organism>
<reference key="1">
    <citation type="journal article" date="1999" name="Nature">
        <title>Sequence and analysis of chromosome 2 of the plant Arabidopsis thaliana.</title>
        <authorList>
            <person name="Lin X."/>
            <person name="Kaul S."/>
            <person name="Rounsley S.D."/>
            <person name="Shea T.P."/>
            <person name="Benito M.-I."/>
            <person name="Town C.D."/>
            <person name="Fujii C.Y."/>
            <person name="Mason T.M."/>
            <person name="Bowman C.L."/>
            <person name="Barnstead M.E."/>
            <person name="Feldblyum T.V."/>
            <person name="Buell C.R."/>
            <person name="Ketchum K.A."/>
            <person name="Lee J.J."/>
            <person name="Ronning C.M."/>
            <person name="Koo H.L."/>
            <person name="Moffat K.S."/>
            <person name="Cronin L.A."/>
            <person name="Shen M."/>
            <person name="Pai G."/>
            <person name="Van Aken S."/>
            <person name="Umayam L."/>
            <person name="Tallon L.J."/>
            <person name="Gill J.E."/>
            <person name="Adams M.D."/>
            <person name="Carrera A.J."/>
            <person name="Creasy T.H."/>
            <person name="Goodman H.M."/>
            <person name="Somerville C.R."/>
            <person name="Copenhaver G.P."/>
            <person name="Preuss D."/>
            <person name="Nierman W.C."/>
            <person name="White O."/>
            <person name="Eisen J.A."/>
            <person name="Salzberg S.L."/>
            <person name="Fraser C.M."/>
            <person name="Venter J.C."/>
        </authorList>
    </citation>
    <scope>NUCLEOTIDE SEQUENCE [LARGE SCALE GENOMIC DNA]</scope>
    <source>
        <strain>cv. Columbia</strain>
    </source>
</reference>
<reference key="2">
    <citation type="journal article" date="2017" name="Plant J.">
        <title>Araport11: a complete reannotation of the Arabidopsis thaliana reference genome.</title>
        <authorList>
            <person name="Cheng C.Y."/>
            <person name="Krishnakumar V."/>
            <person name="Chan A.P."/>
            <person name="Thibaud-Nissen F."/>
            <person name="Schobel S."/>
            <person name="Town C.D."/>
        </authorList>
    </citation>
    <scope>GENOME REANNOTATION</scope>
    <source>
        <strain>cv. Columbia</strain>
    </source>
</reference>
<reference key="3">
    <citation type="journal article" date="2000" name="Plant Mol. Biol.">
        <title>In Arabidopsis thaliana, 1% of the genome codes for a novel protein family unique to plants.</title>
        <authorList>
            <person name="Aubourg S."/>
            <person name="Boudet N."/>
            <person name="Kreis M."/>
            <person name="Lecharny A."/>
        </authorList>
    </citation>
    <scope>GENE FAMILY</scope>
</reference>
<reference key="4">
    <citation type="journal article" date="2004" name="Plant Cell">
        <title>Genome-wide analysis of Arabidopsis pentatricopeptide repeat proteins reveals their essential role in organelle biogenesis.</title>
        <authorList>
            <person name="Lurin C."/>
            <person name="Andres C."/>
            <person name="Aubourg S."/>
            <person name="Bellaoui M."/>
            <person name="Bitton F."/>
            <person name="Bruyere C."/>
            <person name="Caboche M."/>
            <person name="Debast C."/>
            <person name="Gualberto J."/>
            <person name="Hoffmann B."/>
            <person name="Lecharny A."/>
            <person name="Le Ret M."/>
            <person name="Martin-Magniette M.-L."/>
            <person name="Mireau H."/>
            <person name="Peeters N."/>
            <person name="Renou J.-P."/>
            <person name="Szurek B."/>
            <person name="Taconnat L."/>
            <person name="Small I."/>
        </authorList>
    </citation>
    <scope>GENE FAMILY</scope>
</reference>
<protein>
    <recommendedName>
        <fullName>Pentatricopeptide repeat-containing protein At2g33680</fullName>
    </recommendedName>
</protein>
<dbReference type="EMBL" id="U78721">
    <property type="protein sequence ID" value="AAC69139.1"/>
    <property type="molecule type" value="Genomic_DNA"/>
</dbReference>
<dbReference type="EMBL" id="CP002685">
    <property type="protein sequence ID" value="AEC08868.1"/>
    <property type="molecule type" value="Genomic_DNA"/>
</dbReference>
<dbReference type="EMBL" id="CP002685">
    <property type="protein sequence ID" value="ANM61541.1"/>
    <property type="molecule type" value="Genomic_DNA"/>
</dbReference>
<dbReference type="EMBL" id="CP002685">
    <property type="protein sequence ID" value="ANM61544.1"/>
    <property type="molecule type" value="Genomic_DNA"/>
</dbReference>
<dbReference type="PIR" id="C84748">
    <property type="entry name" value="C84748"/>
</dbReference>
<dbReference type="RefSeq" id="NP_001318343.1">
    <property type="nucleotide sequence ID" value="NM_001336461.1"/>
</dbReference>
<dbReference type="RefSeq" id="NP_001323756.1">
    <property type="nucleotide sequence ID" value="NM_001336467.1"/>
</dbReference>
<dbReference type="RefSeq" id="NP_180924.1">
    <property type="nucleotide sequence ID" value="NM_128926.1"/>
</dbReference>
<dbReference type="SMR" id="P93005"/>
<dbReference type="FunCoup" id="P93005">
    <property type="interactions" value="180"/>
</dbReference>
<dbReference type="STRING" id="3702.P93005"/>
<dbReference type="iPTMnet" id="P93005"/>
<dbReference type="PaxDb" id="3702-AT2G33680.1"/>
<dbReference type="EnsemblPlants" id="AT2G33680.1">
    <property type="protein sequence ID" value="AT2G33680.1"/>
    <property type="gene ID" value="AT2G33680"/>
</dbReference>
<dbReference type="EnsemblPlants" id="AT2G33680.7">
    <property type="protein sequence ID" value="AT2G33680.7"/>
    <property type="gene ID" value="AT2G33680"/>
</dbReference>
<dbReference type="EnsemblPlants" id="AT2G33680.8">
    <property type="protein sequence ID" value="AT2G33680.8"/>
    <property type="gene ID" value="AT2G33680"/>
</dbReference>
<dbReference type="GeneID" id="817933"/>
<dbReference type="Gramene" id="AT2G33680.1">
    <property type="protein sequence ID" value="AT2G33680.1"/>
    <property type="gene ID" value="AT2G33680"/>
</dbReference>
<dbReference type="Gramene" id="AT2G33680.7">
    <property type="protein sequence ID" value="AT2G33680.7"/>
    <property type="gene ID" value="AT2G33680"/>
</dbReference>
<dbReference type="Gramene" id="AT2G33680.8">
    <property type="protein sequence ID" value="AT2G33680.8"/>
    <property type="gene ID" value="AT2G33680"/>
</dbReference>
<dbReference type="KEGG" id="ath:AT2G33680"/>
<dbReference type="Araport" id="AT2G33680"/>
<dbReference type="TAIR" id="AT2G33680"/>
<dbReference type="eggNOG" id="KOG4197">
    <property type="taxonomic scope" value="Eukaryota"/>
</dbReference>
<dbReference type="HOGENOM" id="CLU_002706_15_10_1"/>
<dbReference type="InParanoid" id="P93005"/>
<dbReference type="OMA" id="YCRMQME"/>
<dbReference type="OrthoDB" id="1879995at2759"/>
<dbReference type="PhylomeDB" id="P93005"/>
<dbReference type="PRO" id="PR:P93005"/>
<dbReference type="Proteomes" id="UP000006548">
    <property type="component" value="Chromosome 2"/>
</dbReference>
<dbReference type="ExpressionAtlas" id="P93005">
    <property type="expression patterns" value="baseline and differential"/>
</dbReference>
<dbReference type="GO" id="GO:0003723">
    <property type="term" value="F:RNA binding"/>
    <property type="evidence" value="ECO:0007669"/>
    <property type="project" value="InterPro"/>
</dbReference>
<dbReference type="GO" id="GO:0010102">
    <property type="term" value="P:lateral root morphogenesis"/>
    <property type="evidence" value="ECO:0000315"/>
    <property type="project" value="TAIR"/>
</dbReference>
<dbReference type="GO" id="GO:0009266">
    <property type="term" value="P:response to temperature stimulus"/>
    <property type="evidence" value="ECO:0000270"/>
    <property type="project" value="TAIR"/>
</dbReference>
<dbReference type="GO" id="GO:0009451">
    <property type="term" value="P:RNA modification"/>
    <property type="evidence" value="ECO:0007669"/>
    <property type="project" value="InterPro"/>
</dbReference>
<dbReference type="FunFam" id="1.25.40.10:FF:001323">
    <property type="entry name" value="Pentatricopeptide repeat-containing protein At2g33680"/>
    <property type="match status" value="1"/>
</dbReference>
<dbReference type="FunFam" id="1.25.40.10:FF:000158">
    <property type="entry name" value="pentatricopeptide repeat-containing protein At2g33680"/>
    <property type="match status" value="1"/>
</dbReference>
<dbReference type="FunFam" id="1.25.40.10:FF:000687">
    <property type="entry name" value="Pentatricopeptide repeat-containing protein At4g33170"/>
    <property type="match status" value="1"/>
</dbReference>
<dbReference type="FunFam" id="1.25.40.10:FF:000952">
    <property type="entry name" value="Tetratricopeptide repeat (TPR)-like superfamily protein"/>
    <property type="match status" value="1"/>
</dbReference>
<dbReference type="FunFam" id="1.25.40.10:FF:000955">
    <property type="entry name" value="Tetratricopeptide repeat (TPR)-like superfamily protein"/>
    <property type="match status" value="1"/>
</dbReference>
<dbReference type="Gene3D" id="1.25.40.10">
    <property type="entry name" value="Tetratricopeptide repeat domain"/>
    <property type="match status" value="5"/>
</dbReference>
<dbReference type="InterPro" id="IPR046848">
    <property type="entry name" value="E_motif"/>
</dbReference>
<dbReference type="InterPro" id="IPR002885">
    <property type="entry name" value="Pentatricopeptide_rpt"/>
</dbReference>
<dbReference type="InterPro" id="IPR046960">
    <property type="entry name" value="PPR_At4g14850-like_plant"/>
</dbReference>
<dbReference type="InterPro" id="IPR011990">
    <property type="entry name" value="TPR-like_helical_dom_sf"/>
</dbReference>
<dbReference type="NCBIfam" id="TIGR00756">
    <property type="entry name" value="PPR"/>
    <property type="match status" value="4"/>
</dbReference>
<dbReference type="PANTHER" id="PTHR47926">
    <property type="entry name" value="PENTATRICOPEPTIDE REPEAT-CONTAINING PROTEIN"/>
    <property type="match status" value="1"/>
</dbReference>
<dbReference type="PANTHER" id="PTHR47926:SF521">
    <property type="entry name" value="PENTATRICOPEPTIDE REPEAT-CONTAINING PROTEIN"/>
    <property type="match status" value="1"/>
</dbReference>
<dbReference type="Pfam" id="PF20431">
    <property type="entry name" value="E_motif"/>
    <property type="match status" value="1"/>
</dbReference>
<dbReference type="Pfam" id="PF01535">
    <property type="entry name" value="PPR"/>
    <property type="match status" value="2"/>
</dbReference>
<dbReference type="Pfam" id="PF12854">
    <property type="entry name" value="PPR_1"/>
    <property type="match status" value="1"/>
</dbReference>
<dbReference type="Pfam" id="PF13041">
    <property type="entry name" value="PPR_2"/>
    <property type="match status" value="3"/>
</dbReference>
<dbReference type="PROSITE" id="PS51375">
    <property type="entry name" value="PPR"/>
    <property type="match status" value="14"/>
</dbReference>
<evidence type="ECO:0000305" key="1"/>
<proteinExistence type="inferred from homology"/>
<keyword id="KW-1185">Reference proteome</keyword>
<keyword id="KW-0677">Repeat</keyword>
<comment type="similarity">
    <text evidence="1">Belongs to the PPR family. PCMP-E subfamily.</text>
</comment>
<comment type="online information" name="Pentatricopeptide repeat proteins">
    <link uri="https://ppr.plantenergy.uwa.edu.au"/>
</comment>
<feature type="chain" id="PRO_0000356040" description="Pentatricopeptide repeat-containing protein At2g33680">
    <location>
        <begin position="1"/>
        <end position="727"/>
    </location>
</feature>
<feature type="repeat" description="PPR 1">
    <location>
        <begin position="13"/>
        <end position="47"/>
    </location>
</feature>
<feature type="repeat" description="PPR 2">
    <location>
        <begin position="48"/>
        <end position="78"/>
    </location>
</feature>
<feature type="repeat" description="PPR 3">
    <location>
        <begin position="79"/>
        <end position="116"/>
    </location>
</feature>
<feature type="repeat" description="PPR 4">
    <location>
        <begin position="117"/>
        <end position="150"/>
    </location>
</feature>
<feature type="repeat" description="PPR 5">
    <location>
        <begin position="152"/>
        <end position="182"/>
    </location>
</feature>
<feature type="repeat" description="PPR 6">
    <location>
        <begin position="183"/>
        <end position="213"/>
    </location>
</feature>
<feature type="repeat" description="PPR 7">
    <location>
        <begin position="220"/>
        <end position="254"/>
    </location>
</feature>
<feature type="repeat" description="PPR 8">
    <location>
        <begin position="255"/>
        <end position="285"/>
    </location>
</feature>
<feature type="repeat" description="PPR 9">
    <location>
        <begin position="286"/>
        <end position="320"/>
    </location>
</feature>
<feature type="repeat" description="PPR 10">
    <location>
        <begin position="321"/>
        <end position="355"/>
    </location>
</feature>
<feature type="repeat" description="PPR 11">
    <location>
        <begin position="356"/>
        <end position="386"/>
    </location>
</feature>
<feature type="repeat" description="PPR 12">
    <location>
        <begin position="387"/>
        <end position="421"/>
    </location>
</feature>
<feature type="repeat" description="PPR 13">
    <location>
        <begin position="422"/>
        <end position="456"/>
    </location>
</feature>
<feature type="repeat" description="PPR 14">
    <location>
        <begin position="457"/>
        <end position="487"/>
    </location>
</feature>
<feature type="repeat" description="PPR 15">
    <location>
        <begin position="488"/>
        <end position="522"/>
    </location>
</feature>
<feature type="repeat" description="PPR 16">
    <location>
        <begin position="523"/>
        <end position="553"/>
    </location>
</feature>
<feature type="repeat" description="PPR 17">
    <location>
        <begin position="559"/>
        <end position="593"/>
    </location>
</feature>
<feature type="region of interest" description="Type E motif">
    <location>
        <begin position="594"/>
        <end position="669"/>
    </location>
</feature>
<feature type="region of interest" description="Type E(+) motif">
    <location>
        <begin position="670"/>
        <end position="700"/>
    </location>
</feature>
<gene>
    <name type="primary">PCMP-E19</name>
    <name type="ordered locus">At2g33680</name>
    <name type="ORF">T1B8.1</name>
</gene>